<proteinExistence type="inferred from homology"/>
<keyword id="KW-0150">Chloroplast</keyword>
<keyword id="KW-0507">mRNA processing</keyword>
<keyword id="KW-0934">Plastid</keyword>
<keyword id="KW-0694">RNA-binding</keyword>
<keyword id="KW-0819">tRNA processing</keyword>
<sequence length="515" mass="60822">MDEFHRCGKEDSFWQQCFLYPLFFQEDLYAISHDHYLDVSSSSRPMEHLSSNDQLSFLTVKRLIGQIRQQNHSIVLFVNCDPNPLADRKKSFYSESVLEALTLVLEVPFSIWSKSSVEGMNECKSFRSIHSIFPFLEDKFPHSNSILDARIPYSIHPEILVRTFRRWIRDAPSLHPLRSVLYDYRNSPENLQRSIIVVPRVNTRFFLFLLNYYVCECESILFSRLKRSSHSRSLDHGSFPQRTHFHRKIKHIIIFSRRNSLKSIWSLKDPKIHYVRYGERPIIAIKGADLLVKKCRYYLLIFRQFYFHLWSEPYRVCSHQLSKNCSSSPGYFLRVRMNPLLVRTKTLDELFIPVLITNEMDPIVPIVPIIGLLATEKFCDISGRPISKLSWTSLTDDDILDRFDQIWRNLFHYYSGSFDRDGLYRIKYILLLSCAKTLACKHKSTIRVVRKELGPELFKKSFSKEREFDSLPFSSKAAARSQRERIWHSDIPQINPLANSWQKIQDLKIENLFDQ</sequence>
<evidence type="ECO:0000255" key="1">
    <source>
        <dbReference type="HAMAP-Rule" id="MF_01390"/>
    </source>
</evidence>
<organism>
    <name type="scientific">Pinus densiflora</name>
    <name type="common">Japanese red pine</name>
    <dbReference type="NCBI Taxonomy" id="77912"/>
    <lineage>
        <taxon>Eukaryota</taxon>
        <taxon>Viridiplantae</taxon>
        <taxon>Streptophyta</taxon>
        <taxon>Embryophyta</taxon>
        <taxon>Tracheophyta</taxon>
        <taxon>Spermatophyta</taxon>
        <taxon>Pinopsida</taxon>
        <taxon>Pinidae</taxon>
        <taxon>Conifers I</taxon>
        <taxon>Pinales</taxon>
        <taxon>Pinaceae</taxon>
        <taxon>Pinus</taxon>
        <taxon>Pinus subgen. Pinus</taxon>
    </lineage>
</organism>
<protein>
    <recommendedName>
        <fullName evidence="1">Maturase K</fullName>
    </recommendedName>
    <alternativeName>
        <fullName evidence="1">Intron maturase</fullName>
    </alternativeName>
</protein>
<geneLocation type="chloroplast"/>
<dbReference type="EMBL" id="AB084497">
    <property type="protein sequence ID" value="BAC22914.1"/>
    <property type="molecule type" value="Genomic_DNA"/>
</dbReference>
<dbReference type="GO" id="GO:0009507">
    <property type="term" value="C:chloroplast"/>
    <property type="evidence" value="ECO:0007669"/>
    <property type="project" value="UniProtKB-SubCell"/>
</dbReference>
<dbReference type="GO" id="GO:0003723">
    <property type="term" value="F:RNA binding"/>
    <property type="evidence" value="ECO:0007669"/>
    <property type="project" value="UniProtKB-KW"/>
</dbReference>
<dbReference type="GO" id="GO:0006397">
    <property type="term" value="P:mRNA processing"/>
    <property type="evidence" value="ECO:0007669"/>
    <property type="project" value="UniProtKB-KW"/>
</dbReference>
<dbReference type="GO" id="GO:0008380">
    <property type="term" value="P:RNA splicing"/>
    <property type="evidence" value="ECO:0007669"/>
    <property type="project" value="UniProtKB-UniRule"/>
</dbReference>
<dbReference type="GO" id="GO:0008033">
    <property type="term" value="P:tRNA processing"/>
    <property type="evidence" value="ECO:0007669"/>
    <property type="project" value="UniProtKB-KW"/>
</dbReference>
<dbReference type="HAMAP" id="MF_01390">
    <property type="entry name" value="MatK"/>
    <property type="match status" value="1"/>
</dbReference>
<dbReference type="InterPro" id="IPR024937">
    <property type="entry name" value="Domain_X"/>
</dbReference>
<dbReference type="InterPro" id="IPR002866">
    <property type="entry name" value="Maturase_MatK"/>
</dbReference>
<dbReference type="InterPro" id="IPR024942">
    <property type="entry name" value="Maturase_MatK_N"/>
</dbReference>
<dbReference type="PANTHER" id="PTHR34811">
    <property type="entry name" value="MATURASE K"/>
    <property type="match status" value="1"/>
</dbReference>
<dbReference type="PANTHER" id="PTHR34811:SF1">
    <property type="entry name" value="MATURASE K"/>
    <property type="match status" value="1"/>
</dbReference>
<dbReference type="Pfam" id="PF01348">
    <property type="entry name" value="Intron_maturas2"/>
    <property type="match status" value="1"/>
</dbReference>
<dbReference type="Pfam" id="PF01824">
    <property type="entry name" value="MatK_N"/>
    <property type="match status" value="1"/>
</dbReference>
<accession>Q8HQQ2</accession>
<comment type="function">
    <text evidence="1">Usually encoded in the trnK tRNA gene intron. Probably assists in splicing its own and other chloroplast group II introns.</text>
</comment>
<comment type="subcellular location">
    <subcellularLocation>
        <location>Plastid</location>
        <location>Chloroplast</location>
    </subcellularLocation>
</comment>
<comment type="similarity">
    <text evidence="1">Belongs to the intron maturase 2 family. MatK subfamily.</text>
</comment>
<feature type="chain" id="PRO_0000143610" description="Maturase K">
    <location>
        <begin position="1"/>
        <end position="515"/>
    </location>
</feature>
<reference key="1">
    <citation type="submission" date="2002-05" db="EMBL/GenBank/DDBJ databases">
        <title>Phylogeny of diploxylon Pinus.</title>
        <authorList>
            <person name="Geada-Lopez G."/>
            <person name="Kamiya K."/>
            <person name="Harada K."/>
        </authorList>
    </citation>
    <scope>NUCLEOTIDE SEQUENCE [GENOMIC DNA]</scope>
    <source>
        <tissue>Leaf</tissue>
    </source>
</reference>
<name>MATK_PINDE</name>
<gene>
    <name evidence="1" type="primary">matK</name>
</gene>